<sequence length="145" mass="15900">MYPAHLLVLLAVCVSLLGATAIPPLPLNLVQFSNLIQCVNKGSRASYHYADYGCYCGAGGSGTPVDELDRCCKIHDDCYGEAEKMGCYPKWTLYTYDCSTEEPNCSTKTGCQGFVCACDLEAAKCFARSPYNNKNYNIDTSKRCK</sequence>
<name>PA2A1_LATSE</name>
<comment type="function">
    <text evidence="1">PLA2 catalyzes the calcium-dependent hydrolysis of the 2-acyl groups in 3-sn-phosphoglycerides.</text>
</comment>
<comment type="catalytic activity">
    <reaction evidence="3 4">
        <text>a 1,2-diacyl-sn-glycero-3-phosphocholine + H2O = a 1-acyl-sn-glycero-3-phosphocholine + a fatty acid + H(+)</text>
        <dbReference type="Rhea" id="RHEA:15801"/>
        <dbReference type="ChEBI" id="CHEBI:15377"/>
        <dbReference type="ChEBI" id="CHEBI:15378"/>
        <dbReference type="ChEBI" id="CHEBI:28868"/>
        <dbReference type="ChEBI" id="CHEBI:57643"/>
        <dbReference type="ChEBI" id="CHEBI:58168"/>
        <dbReference type="EC" id="3.1.1.4"/>
    </reaction>
</comment>
<comment type="cofactor">
    <cofactor evidence="1">
        <name>Ca(2+)</name>
        <dbReference type="ChEBI" id="CHEBI:29108"/>
    </cofactor>
    <text evidence="1">Binds 1 Ca(2+) ion.</text>
</comment>
<comment type="subunit">
    <text evidence="5">Monomer.</text>
</comment>
<comment type="subcellular location">
    <subcellularLocation>
        <location>Secreted</location>
    </subcellularLocation>
</comment>
<comment type="tissue specificity">
    <text>Expressed by the venom gland.</text>
</comment>
<comment type="similarity">
    <text evidence="6">Belongs to the phospholipase A2 family. Group I subfamily. D49 sub-subfamily.</text>
</comment>
<organism>
    <name type="scientific">Laticauda semifasciata</name>
    <name type="common">Black-banded sea krait</name>
    <name type="synonym">Pseudolaticauda semifasciata</name>
    <dbReference type="NCBI Taxonomy" id="8631"/>
    <lineage>
        <taxon>Eukaryota</taxon>
        <taxon>Metazoa</taxon>
        <taxon>Chordata</taxon>
        <taxon>Craniata</taxon>
        <taxon>Vertebrata</taxon>
        <taxon>Euteleostomi</taxon>
        <taxon>Lepidosauria</taxon>
        <taxon>Squamata</taxon>
        <taxon>Bifurcata</taxon>
        <taxon>Unidentata</taxon>
        <taxon>Episquamata</taxon>
        <taxon>Toxicofera</taxon>
        <taxon>Serpentes</taxon>
        <taxon>Colubroidea</taxon>
        <taxon>Elapidae</taxon>
        <taxon>Laticaudinae</taxon>
        <taxon>Laticauda</taxon>
    </lineage>
</organism>
<dbReference type="EC" id="3.1.1.4"/>
<dbReference type="EMBL" id="AB062440">
    <property type="protein sequence ID" value="BAB72247.1"/>
    <property type="molecule type" value="Genomic_DNA"/>
</dbReference>
<dbReference type="PIR" id="A94325">
    <property type="entry name" value="PSLT1E"/>
</dbReference>
<dbReference type="SMR" id="P00611"/>
<dbReference type="GO" id="GO:0005576">
    <property type="term" value="C:extracellular region"/>
    <property type="evidence" value="ECO:0007669"/>
    <property type="project" value="UniProtKB-SubCell"/>
</dbReference>
<dbReference type="GO" id="GO:0005509">
    <property type="term" value="F:calcium ion binding"/>
    <property type="evidence" value="ECO:0007669"/>
    <property type="project" value="InterPro"/>
</dbReference>
<dbReference type="GO" id="GO:0047498">
    <property type="term" value="F:calcium-dependent phospholipase A2 activity"/>
    <property type="evidence" value="ECO:0007669"/>
    <property type="project" value="TreeGrafter"/>
</dbReference>
<dbReference type="GO" id="GO:0005543">
    <property type="term" value="F:phospholipid binding"/>
    <property type="evidence" value="ECO:0007669"/>
    <property type="project" value="TreeGrafter"/>
</dbReference>
<dbReference type="GO" id="GO:0050482">
    <property type="term" value="P:arachidonate secretion"/>
    <property type="evidence" value="ECO:0007669"/>
    <property type="project" value="InterPro"/>
</dbReference>
<dbReference type="GO" id="GO:0016042">
    <property type="term" value="P:lipid catabolic process"/>
    <property type="evidence" value="ECO:0007669"/>
    <property type="project" value="UniProtKB-KW"/>
</dbReference>
<dbReference type="GO" id="GO:0006644">
    <property type="term" value="P:phospholipid metabolic process"/>
    <property type="evidence" value="ECO:0007669"/>
    <property type="project" value="InterPro"/>
</dbReference>
<dbReference type="CDD" id="cd00125">
    <property type="entry name" value="PLA2c"/>
    <property type="match status" value="1"/>
</dbReference>
<dbReference type="FunFam" id="1.20.90.10:FF:000007">
    <property type="entry name" value="Acidic phospholipase A2"/>
    <property type="match status" value="1"/>
</dbReference>
<dbReference type="Gene3D" id="1.20.90.10">
    <property type="entry name" value="Phospholipase A2 domain"/>
    <property type="match status" value="1"/>
</dbReference>
<dbReference type="InterPro" id="IPR001211">
    <property type="entry name" value="PLipase_A2"/>
</dbReference>
<dbReference type="InterPro" id="IPR033112">
    <property type="entry name" value="PLipase_A2_Asp_AS"/>
</dbReference>
<dbReference type="InterPro" id="IPR016090">
    <property type="entry name" value="PLipase_A2_dom"/>
</dbReference>
<dbReference type="InterPro" id="IPR036444">
    <property type="entry name" value="PLipase_A2_dom_sf"/>
</dbReference>
<dbReference type="InterPro" id="IPR033113">
    <property type="entry name" value="PLipase_A2_His_AS"/>
</dbReference>
<dbReference type="PANTHER" id="PTHR11716:SF94">
    <property type="entry name" value="PHOSPHOLIPASE A2"/>
    <property type="match status" value="1"/>
</dbReference>
<dbReference type="PANTHER" id="PTHR11716">
    <property type="entry name" value="PHOSPHOLIPASE A2 FAMILY MEMBER"/>
    <property type="match status" value="1"/>
</dbReference>
<dbReference type="Pfam" id="PF00068">
    <property type="entry name" value="Phospholip_A2_1"/>
    <property type="match status" value="1"/>
</dbReference>
<dbReference type="PRINTS" id="PR00389">
    <property type="entry name" value="PHPHLIPASEA2"/>
</dbReference>
<dbReference type="SMART" id="SM00085">
    <property type="entry name" value="PA2c"/>
    <property type="match status" value="1"/>
</dbReference>
<dbReference type="SUPFAM" id="SSF48619">
    <property type="entry name" value="Phospholipase A2, PLA2"/>
    <property type="match status" value="1"/>
</dbReference>
<dbReference type="PROSITE" id="PS00119">
    <property type="entry name" value="PA2_ASP"/>
    <property type="match status" value="1"/>
</dbReference>
<dbReference type="PROSITE" id="PS00118">
    <property type="entry name" value="PA2_HIS"/>
    <property type="match status" value="1"/>
</dbReference>
<keyword id="KW-0106">Calcium</keyword>
<keyword id="KW-0903">Direct protein sequencing</keyword>
<keyword id="KW-1015">Disulfide bond</keyword>
<keyword id="KW-0378">Hydrolase</keyword>
<keyword id="KW-0442">Lipid degradation</keyword>
<keyword id="KW-0443">Lipid metabolism</keyword>
<keyword id="KW-0479">Metal-binding</keyword>
<keyword id="KW-0964">Secreted</keyword>
<keyword id="KW-0732">Signal</keyword>
<accession>P00611</accession>
<accession>Q9I848</accession>
<proteinExistence type="evidence at protein level"/>
<protein>
    <recommendedName>
        <fullName>Acidic phospholipase A2 1</fullName>
        <shortName>svPLA2</shortName>
        <ecNumber>3.1.1.4</ecNumber>
    </recommendedName>
    <alternativeName>
        <fullName>GL5-1</fullName>
    </alternativeName>
    <alternativeName>
        <fullName>Phosphatidylcholine 2-acylhydrolase</fullName>
    </alternativeName>
    <alternativeName>
        <fullName>Phospholipase A2 isozyme I</fullName>
    </alternativeName>
</protein>
<feature type="signal peptide" evidence="2">
    <location>
        <begin position="1"/>
        <end position="21"/>
    </location>
</feature>
<feature type="propeptide" id="PRO_0000022896" evidence="5">
    <location>
        <begin position="22"/>
        <end position="27"/>
    </location>
</feature>
<feature type="chain" id="PRO_0000022897" description="Acidic phospholipase A2 1">
    <location>
        <begin position="28"/>
        <end position="145"/>
    </location>
</feature>
<feature type="active site" evidence="1">
    <location>
        <position position="75"/>
    </location>
</feature>
<feature type="active site" evidence="1">
    <location>
        <position position="119"/>
    </location>
</feature>
<feature type="binding site" evidence="1">
    <location>
        <position position="55"/>
    </location>
    <ligand>
        <name>Ca(2+)</name>
        <dbReference type="ChEBI" id="CHEBI:29108"/>
    </ligand>
</feature>
<feature type="binding site" evidence="1">
    <location>
        <position position="57"/>
    </location>
    <ligand>
        <name>Ca(2+)</name>
        <dbReference type="ChEBI" id="CHEBI:29108"/>
    </ligand>
</feature>
<feature type="binding site" evidence="1">
    <location>
        <position position="59"/>
    </location>
    <ligand>
        <name>Ca(2+)</name>
        <dbReference type="ChEBI" id="CHEBI:29108"/>
    </ligand>
</feature>
<feature type="binding site" evidence="1">
    <location>
        <position position="76"/>
    </location>
    <ligand>
        <name>Ca(2+)</name>
        <dbReference type="ChEBI" id="CHEBI:29108"/>
    </ligand>
</feature>
<feature type="site" description="Specific activity reduced 20-fold by modification">
    <location>
        <position position="91"/>
    </location>
</feature>
<feature type="disulfide bond" evidence="1">
    <location>
        <begin position="38"/>
        <end position="98"/>
    </location>
</feature>
<feature type="disulfide bond" evidence="1">
    <location>
        <begin position="54"/>
        <end position="144"/>
    </location>
</feature>
<feature type="disulfide bond" evidence="1">
    <location>
        <begin position="56"/>
        <end position="72"/>
    </location>
</feature>
<feature type="disulfide bond" evidence="1">
    <location>
        <begin position="71"/>
        <end position="125"/>
    </location>
</feature>
<feature type="disulfide bond" evidence="1">
    <location>
        <begin position="78"/>
        <end position="118"/>
    </location>
</feature>
<feature type="disulfide bond" evidence="1">
    <location>
        <begin position="87"/>
        <end position="111"/>
    </location>
</feature>
<feature type="disulfide bond" evidence="1">
    <location>
        <begin position="105"/>
        <end position="116"/>
    </location>
</feature>
<feature type="sequence conflict" description="In Ref. 2; AA sequence." evidence="6" ref="2">
    <original>VN</original>
    <variation>NV</variation>
    <location>
        <begin position="39"/>
        <end position="40"/>
    </location>
</feature>
<feature type="sequence conflict" description="In Ref. 2; AA sequence." evidence="6" ref="2">
    <original>D</original>
    <variation>N</variation>
    <location>
        <position position="77"/>
    </location>
</feature>
<evidence type="ECO:0000250" key="1"/>
<evidence type="ECO:0000255" key="2"/>
<evidence type="ECO:0000255" key="3">
    <source>
        <dbReference type="PROSITE-ProRule" id="PRU10035"/>
    </source>
</evidence>
<evidence type="ECO:0000255" key="4">
    <source>
        <dbReference type="PROSITE-ProRule" id="PRU10036"/>
    </source>
</evidence>
<evidence type="ECO:0000269" key="5">
    <source>
    </source>
</evidence>
<evidence type="ECO:0000305" key="6"/>
<reference key="1">
    <citation type="journal article" date="2002" name="Toxicon">
        <title>A comparative analysis of invaded sequences from group IA phospholipase A(2) genes provides evidence about the divergence period of genes groups and snake families.</title>
        <authorList>
            <person name="Fujimi T.J."/>
            <person name="Tsuchiya T."/>
            <person name="Tamiya T."/>
        </authorList>
    </citation>
    <scope>NUCLEOTIDE SEQUENCE [GENOMIC DNA]</scope>
    <source>
        <tissue>Liver</tissue>
    </source>
</reference>
<reference key="2">
    <citation type="journal article" date="1982" name="Biochem. J.">
        <title>Amino acid sequences of three phospholipases A I, III and IV from the venom of the sea snake Laticauda semifasciata.</title>
        <authorList>
            <person name="Nishida S."/>
            <person name="Kim H.S."/>
            <person name="Tamiya N."/>
        </authorList>
    </citation>
    <scope>PROTEIN SEQUENCE OF 28-145</scope>
    <scope>SUBUNIT</scope>
    <source>
        <tissue>Venom</tissue>
    </source>
</reference>
<reference key="3">
    <citation type="journal article" date="1988" name="Toxicon">
        <title>Correction of amino acid sequence of phospholipase A2 I from the venom of Laticauda semifasciata (Erabu sea snake).</title>
        <authorList>
            <person name="Takasaki C."/>
            <person name="Kuramochi H."/>
            <person name="Shimazu T."/>
            <person name="Tamiya N."/>
        </authorList>
    </citation>
    <scope>SEQUENCE REVISION TO 97-107</scope>
</reference>